<accession>P77398</accession>
<accession>Q56VX0</accession>
<protein>
    <recommendedName>
        <fullName>Bifunctional polymyxin resistance protein ArnA</fullName>
    </recommendedName>
    <alternativeName>
        <fullName>Polymyxin resistance protein PmrI</fullName>
    </alternativeName>
    <domain>
        <recommendedName>
            <fullName>UDP-4-amino-4-deoxy-L-arabinose formyltransferase</fullName>
            <ecNumber evidence="5">2.1.2.13</ecNumber>
        </recommendedName>
        <alternativeName>
            <fullName>ArnAFT</fullName>
        </alternativeName>
        <alternativeName>
            <fullName>UDP-L-Ara4N formyltransferase</fullName>
        </alternativeName>
    </domain>
    <domain>
        <recommendedName>
            <fullName>UDP-glucuronic acid oxidase, UDP-4-keto-hexauronic acid decarboxylating</fullName>
            <ecNumber evidence="2">1.1.1.305</ecNumber>
        </recommendedName>
        <alternativeName>
            <fullName>ArnADH</fullName>
        </alternativeName>
        <alternativeName>
            <fullName>UDP-GlcUA decarboxylase</fullName>
        </alternativeName>
        <alternativeName>
            <fullName>UDP-glucuronic acid dehydrogenase</fullName>
        </alternativeName>
    </domain>
</protein>
<gene>
    <name type="primary">arnA</name>
    <name type="synonym">pmrI</name>
    <name type="synonym">yfbG</name>
    <name type="ordered locus">b2255</name>
    <name type="ordered locus">JW2249</name>
</gene>
<name>ARNA_ECOLI</name>
<dbReference type="EC" id="2.1.2.13" evidence="5"/>
<dbReference type="EC" id="1.1.1.305" evidence="2"/>
<dbReference type="EMBL" id="AY057445">
    <property type="protein sequence ID" value="AAL23678.1"/>
    <property type="molecule type" value="Genomic_DNA"/>
</dbReference>
<dbReference type="EMBL" id="U00096">
    <property type="protein sequence ID" value="AAC75315.1"/>
    <property type="molecule type" value="Genomic_DNA"/>
</dbReference>
<dbReference type="EMBL" id="AP009048">
    <property type="protein sequence ID" value="BAA16078.1"/>
    <property type="molecule type" value="Genomic_DNA"/>
</dbReference>
<dbReference type="PIR" id="E64996">
    <property type="entry name" value="E64996"/>
</dbReference>
<dbReference type="RefSeq" id="NP_416758.1">
    <property type="nucleotide sequence ID" value="NC_000913.3"/>
</dbReference>
<dbReference type="RefSeq" id="WP_000860273.1">
    <property type="nucleotide sequence ID" value="NZ_LN832404.1"/>
</dbReference>
<dbReference type="PDB" id="1U9J">
    <property type="method" value="X-ray"/>
    <property type="resolution" value="2.40 A"/>
    <property type="chains" value="A=306-660"/>
</dbReference>
<dbReference type="PDB" id="1YRW">
    <property type="method" value="X-ray"/>
    <property type="resolution" value="1.70 A"/>
    <property type="chains" value="A=1-300"/>
</dbReference>
<dbReference type="PDB" id="1Z73">
    <property type="method" value="X-ray"/>
    <property type="resolution" value="2.50 A"/>
    <property type="chains" value="A=306-660"/>
</dbReference>
<dbReference type="PDB" id="1Z74">
    <property type="method" value="X-ray"/>
    <property type="resolution" value="2.70 A"/>
    <property type="chains" value="A=306-660"/>
</dbReference>
<dbReference type="PDB" id="1Z75">
    <property type="method" value="X-ray"/>
    <property type="resolution" value="2.40 A"/>
    <property type="chains" value="A=306-660"/>
</dbReference>
<dbReference type="PDB" id="1Z7B">
    <property type="method" value="X-ray"/>
    <property type="resolution" value="2.31 A"/>
    <property type="chains" value="A=306-660"/>
</dbReference>
<dbReference type="PDB" id="1Z7E">
    <property type="method" value="X-ray"/>
    <property type="resolution" value="3.00 A"/>
    <property type="chains" value="A/B/C/D/E/F=1-660"/>
</dbReference>
<dbReference type="PDB" id="2BLL">
    <property type="method" value="X-ray"/>
    <property type="resolution" value="2.30 A"/>
    <property type="chains" value="A=317-660"/>
</dbReference>
<dbReference type="PDB" id="2BLN">
    <property type="method" value="X-ray"/>
    <property type="resolution" value="1.20 A"/>
    <property type="chains" value="A/B=1-305"/>
</dbReference>
<dbReference type="PDB" id="4WKG">
    <property type="method" value="X-ray"/>
    <property type="resolution" value="2.70 A"/>
    <property type="chains" value="A/B/C/D/E/F=1-660"/>
</dbReference>
<dbReference type="PDB" id="6PIH">
    <property type="method" value="EM"/>
    <property type="resolution" value="6.60 A"/>
    <property type="chains" value="A/B/C/D/E/F=1-300, G/H/I/J/K/L=317-660"/>
</dbReference>
<dbReference type="PDB" id="6PIK">
    <property type="method" value="EM"/>
    <property type="resolution" value="7.80 A"/>
    <property type="chains" value="A/B/C/D=1-300, E/F/G/H=317-660"/>
</dbReference>
<dbReference type="PDB" id="8FTN">
    <property type="method" value="X-ray"/>
    <property type="resolution" value="2.80 A"/>
    <property type="chains" value="A=306-660"/>
</dbReference>
<dbReference type="PDBsum" id="1U9J"/>
<dbReference type="PDBsum" id="1YRW"/>
<dbReference type="PDBsum" id="1Z73"/>
<dbReference type="PDBsum" id="1Z74"/>
<dbReference type="PDBsum" id="1Z75"/>
<dbReference type="PDBsum" id="1Z7B"/>
<dbReference type="PDBsum" id="1Z7E"/>
<dbReference type="PDBsum" id="2BLL"/>
<dbReference type="PDBsum" id="2BLN"/>
<dbReference type="PDBsum" id="4WKG"/>
<dbReference type="PDBsum" id="6PIH"/>
<dbReference type="PDBsum" id="6PIK"/>
<dbReference type="PDBsum" id="8FTN"/>
<dbReference type="SMR" id="P77398"/>
<dbReference type="BioGRID" id="4260497">
    <property type="interactions" value="272"/>
</dbReference>
<dbReference type="BioGRID" id="851996">
    <property type="interactions" value="2"/>
</dbReference>
<dbReference type="DIP" id="DIP-11961N"/>
<dbReference type="FunCoup" id="P77398">
    <property type="interactions" value="490"/>
</dbReference>
<dbReference type="IntAct" id="P77398">
    <property type="interactions" value="15"/>
</dbReference>
<dbReference type="STRING" id="511145.b2255"/>
<dbReference type="DrugBank" id="DB03256">
    <property type="generic name" value="(6R)-Folinic acid"/>
</dbReference>
<dbReference type="DrugBank" id="DB03685">
    <property type="generic name" value="Uridine monophosphate"/>
</dbReference>
<dbReference type="PaxDb" id="511145-b2255"/>
<dbReference type="EnsemblBacteria" id="AAC75315">
    <property type="protein sequence ID" value="AAC75315"/>
    <property type="gene ID" value="b2255"/>
</dbReference>
<dbReference type="GeneID" id="947683"/>
<dbReference type="KEGG" id="ecj:JW2249"/>
<dbReference type="KEGG" id="eco:b2255"/>
<dbReference type="KEGG" id="ecoc:C3026_12595"/>
<dbReference type="PATRIC" id="fig|1411691.4.peg.4482"/>
<dbReference type="EchoBASE" id="EB3844"/>
<dbReference type="eggNOG" id="COG0223">
    <property type="taxonomic scope" value="Bacteria"/>
</dbReference>
<dbReference type="eggNOG" id="COG0451">
    <property type="taxonomic scope" value="Bacteria"/>
</dbReference>
<dbReference type="HOGENOM" id="CLU_007383_23_1_6"/>
<dbReference type="InParanoid" id="P77398"/>
<dbReference type="OMA" id="VRYCVKY"/>
<dbReference type="OrthoDB" id="9802815at2"/>
<dbReference type="PhylomeDB" id="P77398"/>
<dbReference type="BioCyc" id="EcoCyc:G7168-MONOMER"/>
<dbReference type="BioCyc" id="MetaCyc:G7168-MONOMER"/>
<dbReference type="BRENDA" id="1.1.1.305">
    <property type="organism ID" value="2026"/>
</dbReference>
<dbReference type="BRENDA" id="2.1.2.13">
    <property type="organism ID" value="2026"/>
</dbReference>
<dbReference type="SABIO-RK" id="P77398"/>
<dbReference type="UniPathway" id="UPA00030"/>
<dbReference type="UniPathway" id="UPA00032">
    <property type="reaction ID" value="UER00492"/>
</dbReference>
<dbReference type="UniPathway" id="UPA00032">
    <property type="reaction ID" value="UER00494"/>
</dbReference>
<dbReference type="EvolutionaryTrace" id="P77398"/>
<dbReference type="PRO" id="PR:P77398"/>
<dbReference type="Proteomes" id="UP000000625">
    <property type="component" value="Chromosome"/>
</dbReference>
<dbReference type="GO" id="GO:0016020">
    <property type="term" value="C:membrane"/>
    <property type="evidence" value="ECO:0007669"/>
    <property type="project" value="GOC"/>
</dbReference>
<dbReference type="GO" id="GO:0032991">
    <property type="term" value="C:protein-containing complex"/>
    <property type="evidence" value="ECO:0000314"/>
    <property type="project" value="EcoCyc"/>
</dbReference>
<dbReference type="GO" id="GO:0042802">
    <property type="term" value="F:identical protein binding"/>
    <property type="evidence" value="ECO:0000314"/>
    <property type="project" value="EcoCyc"/>
</dbReference>
<dbReference type="GO" id="GO:0070403">
    <property type="term" value="F:NAD+ binding"/>
    <property type="evidence" value="ECO:0000314"/>
    <property type="project" value="UniProtKB"/>
</dbReference>
<dbReference type="GO" id="GO:0099619">
    <property type="term" value="F:UDP-4-amino-4-deoxy-L-arabinose formyltransferase activity"/>
    <property type="evidence" value="ECO:0000314"/>
    <property type="project" value="EcoCyc"/>
</dbReference>
<dbReference type="GO" id="GO:0048040">
    <property type="term" value="F:UDP-glucuronate decarboxylase activity"/>
    <property type="evidence" value="ECO:0000314"/>
    <property type="project" value="UniProtKB"/>
</dbReference>
<dbReference type="GO" id="GO:0099618">
    <property type="term" value="F:UDP-glucuronate dehydrogenase activity"/>
    <property type="evidence" value="ECO:0000314"/>
    <property type="project" value="EcoCyc"/>
</dbReference>
<dbReference type="GO" id="GO:0009245">
    <property type="term" value="P:lipid A biosynthetic process"/>
    <property type="evidence" value="ECO:0007669"/>
    <property type="project" value="UniProtKB-KW"/>
</dbReference>
<dbReference type="GO" id="GO:0009103">
    <property type="term" value="P:lipopolysaccharide biosynthetic process"/>
    <property type="evidence" value="ECO:0007669"/>
    <property type="project" value="UniProtKB-UniRule"/>
</dbReference>
<dbReference type="GO" id="GO:0046677">
    <property type="term" value="P:response to antibiotic"/>
    <property type="evidence" value="ECO:0000315"/>
    <property type="project" value="EcoCyc"/>
</dbReference>
<dbReference type="GO" id="GO:2001315">
    <property type="term" value="P:UDP-4-deoxy-4-formamido-beta-L-arabinopyranose biosynthetic process"/>
    <property type="evidence" value="ECO:0000315"/>
    <property type="project" value="EcoCyc"/>
</dbReference>
<dbReference type="GO" id="GO:0033320">
    <property type="term" value="P:UDP-D-xylose biosynthetic process"/>
    <property type="evidence" value="ECO:0000314"/>
    <property type="project" value="UniProtKB"/>
</dbReference>
<dbReference type="CDD" id="cd08702">
    <property type="entry name" value="Arna_FMT_C"/>
    <property type="match status" value="1"/>
</dbReference>
<dbReference type="CDD" id="cd05257">
    <property type="entry name" value="Arna_like_SDR_e"/>
    <property type="match status" value="1"/>
</dbReference>
<dbReference type="CDD" id="cd08644">
    <property type="entry name" value="FMT_core_ArnA_N"/>
    <property type="match status" value="1"/>
</dbReference>
<dbReference type="FunFam" id="3.40.50.12230:FF:000002">
    <property type="entry name" value="Bifunctional polymyxin resistance protein ArnA"/>
    <property type="match status" value="1"/>
</dbReference>
<dbReference type="FunFam" id="3.40.50.720:FF:000197">
    <property type="entry name" value="Bifunctional polymyxin resistance protein ArnA"/>
    <property type="match status" value="1"/>
</dbReference>
<dbReference type="Gene3D" id="3.40.50.12230">
    <property type="match status" value="1"/>
</dbReference>
<dbReference type="Gene3D" id="3.40.50.720">
    <property type="entry name" value="NAD(P)-binding Rossmann-like Domain"/>
    <property type="match status" value="1"/>
</dbReference>
<dbReference type="HAMAP" id="MF_01166">
    <property type="entry name" value="ArnA"/>
    <property type="match status" value="1"/>
</dbReference>
<dbReference type="InterPro" id="IPR045869">
    <property type="entry name" value="Arna-like_SDR_e"/>
</dbReference>
<dbReference type="InterPro" id="IPR021168">
    <property type="entry name" value="Bifun_polymyxin_resist_ArnA"/>
</dbReference>
<dbReference type="InterPro" id="IPR001509">
    <property type="entry name" value="Epimerase_deHydtase"/>
</dbReference>
<dbReference type="InterPro" id="IPR005793">
    <property type="entry name" value="Formyl_trans_C"/>
</dbReference>
<dbReference type="InterPro" id="IPR002376">
    <property type="entry name" value="Formyl_transf_N"/>
</dbReference>
<dbReference type="InterPro" id="IPR036477">
    <property type="entry name" value="Formyl_transf_N_sf"/>
</dbReference>
<dbReference type="InterPro" id="IPR011034">
    <property type="entry name" value="Formyl_transferase-like_C_sf"/>
</dbReference>
<dbReference type="InterPro" id="IPR050177">
    <property type="entry name" value="Lipid_A_modif_metabolic_enz"/>
</dbReference>
<dbReference type="InterPro" id="IPR036291">
    <property type="entry name" value="NAD(P)-bd_dom_sf"/>
</dbReference>
<dbReference type="NCBIfam" id="NF005414">
    <property type="entry name" value="PRK06988.1"/>
    <property type="match status" value="1"/>
</dbReference>
<dbReference type="NCBIfam" id="NF005998">
    <property type="entry name" value="PRK08125.1"/>
    <property type="match status" value="1"/>
</dbReference>
<dbReference type="NCBIfam" id="NF008872">
    <property type="entry name" value="PRK11908.1"/>
    <property type="match status" value="1"/>
</dbReference>
<dbReference type="PANTHER" id="PTHR43245">
    <property type="entry name" value="BIFUNCTIONAL POLYMYXIN RESISTANCE PROTEIN ARNA"/>
    <property type="match status" value="1"/>
</dbReference>
<dbReference type="PANTHER" id="PTHR43245:SF13">
    <property type="entry name" value="UDP-D-APIOSE_UDP-D-XYLOSE SYNTHASE 2"/>
    <property type="match status" value="1"/>
</dbReference>
<dbReference type="Pfam" id="PF01370">
    <property type="entry name" value="Epimerase"/>
    <property type="match status" value="1"/>
</dbReference>
<dbReference type="Pfam" id="PF02911">
    <property type="entry name" value="Formyl_trans_C"/>
    <property type="match status" value="1"/>
</dbReference>
<dbReference type="Pfam" id="PF00551">
    <property type="entry name" value="Formyl_trans_N"/>
    <property type="match status" value="1"/>
</dbReference>
<dbReference type="PIRSF" id="PIRSF036506">
    <property type="entry name" value="Bifun_polymyxin_resist_ArnA"/>
    <property type="match status" value="1"/>
</dbReference>
<dbReference type="SUPFAM" id="SSF50486">
    <property type="entry name" value="FMT C-terminal domain-like"/>
    <property type="match status" value="1"/>
</dbReference>
<dbReference type="SUPFAM" id="SSF53328">
    <property type="entry name" value="Formyltransferase"/>
    <property type="match status" value="1"/>
</dbReference>
<dbReference type="SUPFAM" id="SSF51735">
    <property type="entry name" value="NAD(P)-binding Rossmann-fold domains"/>
    <property type="match status" value="1"/>
</dbReference>
<comment type="function">
    <text evidence="1 2 4 5">Bifunctional enzyme that catalyzes the oxidative decarboxylation of UDP-glucuronic acid (UDP-GlcUA) to UDP-4-keto-arabinose (UDP-Ara4O) and the addition of a formyl group to UDP-4-amino-4-deoxy-L-arabinose (UDP-L-Ara4N) to form UDP-L-4-formamido-arabinose (UDP-L-Ara4FN). The modified arabinose is attached to lipid A and is required for resistance to polymyxin and cationic antimicrobial peptides.</text>
</comment>
<comment type="catalytic activity">
    <reaction evidence="2">
        <text>UDP-alpha-D-glucuronate + NAD(+) = UDP-beta-L-threo-pentopyranos-4-ulose + CO2 + NADH</text>
        <dbReference type="Rhea" id="RHEA:24702"/>
        <dbReference type="ChEBI" id="CHEBI:16526"/>
        <dbReference type="ChEBI" id="CHEBI:57540"/>
        <dbReference type="ChEBI" id="CHEBI:57945"/>
        <dbReference type="ChEBI" id="CHEBI:58052"/>
        <dbReference type="ChEBI" id="CHEBI:58710"/>
        <dbReference type="EC" id="1.1.1.305"/>
    </reaction>
    <physiologicalReaction direction="left-to-right" evidence="10">
        <dbReference type="Rhea" id="RHEA:24703"/>
    </physiologicalReaction>
</comment>
<comment type="catalytic activity">
    <reaction evidence="5">
        <text>UDP-4-amino-4-deoxy-beta-L-arabinose + (6R)-10-formyltetrahydrofolate = UDP-4-deoxy-4-formamido-beta-L-arabinose + (6S)-5,6,7,8-tetrahydrofolate + H(+)</text>
        <dbReference type="Rhea" id="RHEA:24706"/>
        <dbReference type="ChEBI" id="CHEBI:15378"/>
        <dbReference type="ChEBI" id="CHEBI:57453"/>
        <dbReference type="ChEBI" id="CHEBI:58708"/>
        <dbReference type="ChEBI" id="CHEBI:58709"/>
        <dbReference type="ChEBI" id="CHEBI:195366"/>
        <dbReference type="EC" id="2.1.2.13"/>
    </reaction>
    <physiologicalReaction direction="left-to-right" evidence="11">
        <dbReference type="Rhea" id="RHEA:24707"/>
    </physiologicalReaction>
</comment>
<comment type="biophysicochemical properties">
    <kinetics>
        <KM evidence="2">0.76 mM for NAD(+)</KM>
        <KM evidence="2">0.086 mM for UDP-GlcUA</KM>
    </kinetics>
</comment>
<comment type="pathway">
    <text evidence="8">Nucleotide-sugar biosynthesis; UDP-4-deoxy-4-formamido-beta-L-arabinose biosynthesis; UDP-4-deoxy-4-formamido-beta-L-arabinose from UDP-alpha-D-glucuronate: step 1/3.</text>
</comment>
<comment type="pathway">
    <text evidence="8">Nucleotide-sugar biosynthesis; UDP-4-deoxy-4-formamido-beta-L-arabinose biosynthesis; UDP-4-deoxy-4-formamido-beta-L-arabinose from UDP-alpha-D-glucuronate: step 3/3.</text>
</comment>
<comment type="pathway">
    <text evidence="8">Bacterial outer membrane biogenesis; lipopolysaccharide biosynthesis.</text>
</comment>
<comment type="subunit">
    <text evidence="6 7">Homohexamer, formed by a dimer of trimers.</text>
</comment>
<comment type="interaction">
    <interactant intactId="EBI-545305">
        <id>P77398</id>
    </interactant>
    <interactant intactId="EBI-545305">
        <id>P77398</id>
        <label>arnA</label>
    </interactant>
    <organismsDiffer>false</organismsDiffer>
    <experiments>3</experiments>
</comment>
<comment type="interaction">
    <interactant intactId="EBI-545305">
        <id>P77398</id>
    </interactant>
    <interactant intactId="EBI-544837">
        <id>P76092</id>
        <label>ynbC</label>
    </interactant>
    <organismsDiffer>false</organismsDiffer>
    <experiments>2</experiments>
</comment>
<comment type="induction">
    <text evidence="3">Induced by BasR.</text>
</comment>
<comment type="similarity">
    <text evidence="9">In the N-terminal section; belongs to the Fmt family. UDP-L-Ara4N formyltransferase subfamily.</text>
</comment>
<comment type="similarity">
    <text evidence="9">In the C-terminal section; belongs to the NAD(P)-dependent epimerase/dehydratase family. UDP-glucuronic acid decarboxylase subfamily.</text>
</comment>
<proteinExistence type="evidence at protein level"/>
<reference key="1">
    <citation type="journal article" date="2002" name="J. Biol. Chem.">
        <title>Oxidative decarboxylation of UDP-glucuronic acid in extracts of polymyxin-resistant Escherichia coli. Origin of lipid A species modified with 4-amino-4-deoxy-L-arabinose.</title>
        <authorList>
            <person name="Breazeale S.D."/>
            <person name="Ribeiro A.A."/>
            <person name="Raetz C.R.H."/>
        </authorList>
    </citation>
    <scope>NUCLEOTIDE SEQUENCE [GENOMIC DNA]</scope>
    <scope>FUNCTION OF C-TERMINAL DOMAIN</scope>
    <scope>CHARACTERIZATION</scope>
    <source>
        <strain>K12 / W3110 / ATCC 27325 / DSM 5911</strain>
    </source>
</reference>
<reference key="2">
    <citation type="journal article" date="1997" name="DNA Res.">
        <title>Construction of a contiguous 874-kb sequence of the Escherichia coli-K12 genome corresponding to 50.0-68.8 min on the linkage map and analysis of its sequence features.</title>
        <authorList>
            <person name="Yamamoto Y."/>
            <person name="Aiba H."/>
            <person name="Baba T."/>
            <person name="Hayashi K."/>
            <person name="Inada T."/>
            <person name="Isono K."/>
            <person name="Itoh T."/>
            <person name="Kimura S."/>
            <person name="Kitagawa M."/>
            <person name="Makino K."/>
            <person name="Miki T."/>
            <person name="Mitsuhashi N."/>
            <person name="Mizobuchi K."/>
            <person name="Mori H."/>
            <person name="Nakade S."/>
            <person name="Nakamura Y."/>
            <person name="Nashimoto H."/>
            <person name="Oshima T."/>
            <person name="Oyama S."/>
            <person name="Saito N."/>
            <person name="Sampei G."/>
            <person name="Satoh Y."/>
            <person name="Sivasundaram S."/>
            <person name="Tagami H."/>
            <person name="Takahashi H."/>
            <person name="Takeda J."/>
            <person name="Takemoto K."/>
            <person name="Uehara K."/>
            <person name="Wada C."/>
            <person name="Yamagata S."/>
            <person name="Horiuchi T."/>
        </authorList>
    </citation>
    <scope>NUCLEOTIDE SEQUENCE [LARGE SCALE GENOMIC DNA]</scope>
    <source>
        <strain>K12 / W3110 / ATCC 27325 / DSM 5911</strain>
    </source>
</reference>
<reference key="3">
    <citation type="journal article" date="1997" name="Science">
        <title>The complete genome sequence of Escherichia coli K-12.</title>
        <authorList>
            <person name="Blattner F.R."/>
            <person name="Plunkett G. III"/>
            <person name="Bloch C.A."/>
            <person name="Perna N.T."/>
            <person name="Burland V."/>
            <person name="Riley M."/>
            <person name="Collado-Vides J."/>
            <person name="Glasner J.D."/>
            <person name="Rode C.K."/>
            <person name="Mayhew G.F."/>
            <person name="Gregor J."/>
            <person name="Davis N.W."/>
            <person name="Kirkpatrick H.A."/>
            <person name="Goeden M.A."/>
            <person name="Rose D.J."/>
            <person name="Mau B."/>
            <person name="Shao Y."/>
        </authorList>
    </citation>
    <scope>NUCLEOTIDE SEQUENCE [LARGE SCALE GENOMIC DNA]</scope>
    <source>
        <strain>K12 / MG1655 / ATCC 47076</strain>
    </source>
</reference>
<reference key="4">
    <citation type="journal article" date="2006" name="Mol. Syst. Biol.">
        <title>Highly accurate genome sequences of Escherichia coli K-12 strains MG1655 and W3110.</title>
        <authorList>
            <person name="Hayashi K."/>
            <person name="Morooka N."/>
            <person name="Yamamoto Y."/>
            <person name="Fujita K."/>
            <person name="Isono K."/>
            <person name="Choi S."/>
            <person name="Ohtsubo E."/>
            <person name="Baba T."/>
            <person name="Wanner B.L."/>
            <person name="Mori H."/>
            <person name="Horiuchi T."/>
        </authorList>
    </citation>
    <scope>NUCLEOTIDE SEQUENCE [LARGE SCALE GENOMIC DNA]</scope>
    <source>
        <strain>K12 / W3110 / ATCC 27325 / DSM 5911</strain>
    </source>
</reference>
<reference key="5">
    <citation type="journal article" date="2004" name="Proc. Natl. Acad. Sci. U.S.A.">
        <title>Phenotypic differences between Salmonella and Escherichia coli resulting from the disparate regulation of homologous genes.</title>
        <authorList>
            <person name="Winfield M.D."/>
            <person name="Groisman E.A."/>
        </authorList>
    </citation>
    <scope>INDUCTION BY BASR</scope>
    <source>
        <strain>K12 / MG1655 / ATCC 47076</strain>
    </source>
</reference>
<reference key="6">
    <citation type="journal article" date="2005" name="J. Biol. Chem.">
        <title>A formyltransferase required for polymyxin resistance in Escherichia coli and the modification of lipid A with 4-amino-4-deoxy-L-arabinose: identification and function of UDP-4-deoxy-4-formamido-L-arabinose.</title>
        <authorList>
            <person name="Breazeale S.D."/>
            <person name="Ribeiro A.A."/>
            <person name="McClerren A.L."/>
            <person name="Raetz C.R.H."/>
        </authorList>
    </citation>
    <scope>FUNCTION OF N-TERMINAL DOMAIN</scope>
    <scope>CATALYTIC ACTIVITY</scope>
    <scope>CHARACTERIZATION</scope>
    <source>
        <strain>K12 / W3110 / ATCC 27325 / DSM 5911</strain>
    </source>
</reference>
<reference key="7">
    <citation type="journal article" date="2007" name="J. Biol. Chem.">
        <title>An undecaprenyl phosphate-aminoarabinose flippase required for polymyxin resistance in Escherichia coli.</title>
        <authorList>
            <person name="Yan A."/>
            <person name="Guan Z."/>
            <person name="Raetz C.R.H."/>
        </authorList>
    </citation>
    <scope>PATHWAY</scope>
    <source>
        <strain>K12 / W3110 / ATCC 27325 / DSM 5911</strain>
    </source>
</reference>
<reference key="8">
    <citation type="journal article" date="2004" name="Biochemistry">
        <title>Crystal structure of Escherichia coli ArnA (PmrI) decarboxylase domain. A key enzyme for lipid A modification with 4-amino-4-deoxy-L-arabinose and polymyxin resistance.</title>
        <authorList>
            <person name="Gatzeva-Topalova P.Z."/>
            <person name="May A.P."/>
            <person name="Sousa M.C."/>
        </authorList>
    </citation>
    <scope>X-RAY CRYSTALLOGRAPHY (2.4 ANGSTROMS) OF 306-660</scope>
    <scope>FUNCTION</scope>
    <scope>CATALYTIC ACTIVITY OF C-TERMINAL DOMAIN</scope>
    <scope>BIOPHYSICOCHEMICAL PROPERTIES</scope>
</reference>
<reference key="9">
    <citation type="journal article" date="2005" name="Biochemistry">
        <title>Crystal structure and mechanism of the Escherichia coli ArnA (PmrI) transformylase domain. An enzyme for lipid A modification with 4-amino-4-deoxy-L-arabinose and polymyxin resistance.</title>
        <authorList>
            <person name="Gatzeva-Topalova P.Z."/>
            <person name="May A.P."/>
            <person name="Sousa M.C."/>
        </authorList>
    </citation>
    <scope>X-RAY CRYSTALLOGRAPHY (1.7 ANGSTROMS) OF 1-300</scope>
    <scope>FUNCTION</scope>
    <scope>CATALYTIC ACTIVITY</scope>
    <scope>MUTAGENESIS OF ASN-102; HIS-104 AND ASP-140</scope>
    <scope>REACTION MECHANISM</scope>
</reference>
<reference key="10">
    <citation type="journal article" date="2005" name="J. Biol. Chem.">
        <title>Structure and function of both domains of ArnA, a dual function decarboxylase and a formyltransferase, involved in 4-amino-4-deoxy-L-arabinose biosynthesis.</title>
        <authorList>
            <person name="Williams G.J."/>
            <person name="Breazeale S.D."/>
            <person name="Raetz C.R.H."/>
            <person name="Naismith J.H."/>
        </authorList>
    </citation>
    <scope>X-RAY CRYSTALLOGRAPHY (1.2 ANGSTROMS) IN COMPLEX WITH UMP AND N-5-FTHF</scope>
    <scope>MUTAGENESIS OF SER-433 AND GLU-434</scope>
</reference>
<reference key="11">
    <citation type="journal article" date="2005" name="Structure">
        <title>Structure and mechanism of ArnA: conformational change implies ordered dehydrogenase mechanism in key enzyme for polymyxin resistance.</title>
        <authorList>
            <person name="Gatzeva-Topalova P.Z."/>
            <person name="May A.P."/>
            <person name="Sousa M.C."/>
        </authorList>
    </citation>
    <scope>X-RAY CRYSTALLOGRAPHY (2.31 ANGSTROMS) IN COMPLEX WITH UDP-GLCUA AND NAD ANALOG AND OF 306-660 OF MUTANTS ALA-433; GLU-619; MET-619 AND TYR-619</scope>
    <scope>MUTAGENESIS OF SER-433 AND ARG-619</scope>
    <scope>SUBUNIT</scope>
    <scope>REACTION MECHANISM</scope>
</reference>
<evidence type="ECO:0000269" key="1">
    <source>
    </source>
</evidence>
<evidence type="ECO:0000269" key="2">
    <source>
    </source>
</evidence>
<evidence type="ECO:0000269" key="3">
    <source>
    </source>
</evidence>
<evidence type="ECO:0000269" key="4">
    <source>
    </source>
</evidence>
<evidence type="ECO:0000269" key="5">
    <source>
    </source>
</evidence>
<evidence type="ECO:0000269" key="6">
    <source>
    </source>
</evidence>
<evidence type="ECO:0000269" key="7">
    <source>
    </source>
</evidence>
<evidence type="ECO:0000269" key="8">
    <source>
    </source>
</evidence>
<evidence type="ECO:0000305" key="9"/>
<evidence type="ECO:0000305" key="10">
    <source>
    </source>
</evidence>
<evidence type="ECO:0000305" key="11">
    <source>
    </source>
</evidence>
<evidence type="ECO:0007829" key="12">
    <source>
        <dbReference type="PDB" id="1Z7E"/>
    </source>
</evidence>
<evidence type="ECO:0007829" key="13">
    <source>
        <dbReference type="PDB" id="2BLL"/>
    </source>
</evidence>
<evidence type="ECO:0007829" key="14">
    <source>
        <dbReference type="PDB" id="2BLN"/>
    </source>
</evidence>
<evidence type="ECO:0007829" key="15">
    <source>
        <dbReference type="PDB" id="4WKG"/>
    </source>
</evidence>
<feature type="chain" id="PRO_0000083098" description="Bifunctional polymyxin resistance protein ArnA">
    <location>
        <begin position="1"/>
        <end position="660"/>
    </location>
</feature>
<feature type="region of interest" description="Formyltransferase ArnAFT">
    <location>
        <begin position="1"/>
        <end position="304"/>
    </location>
</feature>
<feature type="region of interest" description="Dehydrogenase ArnADH">
    <location>
        <begin position="314"/>
        <end position="660"/>
    </location>
</feature>
<feature type="active site" description="Proton donor; for formyltransferase activity">
    <location>
        <position position="104"/>
    </location>
</feature>
<feature type="active site" description="Proton acceptor; for decarboxylase activity">
    <location>
        <position position="434"/>
    </location>
</feature>
<feature type="active site" description="Proton donor; for decarboxylase activity">
    <location>
        <position position="619"/>
    </location>
</feature>
<feature type="binding site">
    <location>
        <begin position="86"/>
        <end position="88"/>
    </location>
    <ligand>
        <name>(6R)-10-formyltetrahydrofolate</name>
        <dbReference type="ChEBI" id="CHEBI:195366"/>
    </ligand>
</feature>
<feature type="binding site">
    <location>
        <position position="114"/>
    </location>
    <ligand>
        <name>(6R)-10-formyltetrahydrofolate</name>
        <dbReference type="ChEBI" id="CHEBI:195366"/>
    </ligand>
</feature>
<feature type="binding site">
    <location>
        <begin position="136"/>
        <end position="140"/>
    </location>
    <ligand>
        <name>(6R)-10-formyltetrahydrofolate</name>
        <dbReference type="ChEBI" id="CHEBI:195366"/>
    </ligand>
</feature>
<feature type="binding site">
    <location>
        <position position="347"/>
    </location>
    <ligand>
        <name>NAD(+)</name>
        <dbReference type="ChEBI" id="CHEBI:57540"/>
    </ligand>
</feature>
<feature type="binding site">
    <location>
        <begin position="368"/>
        <end position="369"/>
    </location>
    <ligand>
        <name>NAD(+)</name>
        <dbReference type="ChEBI" id="CHEBI:57540"/>
    </ligand>
</feature>
<feature type="binding site">
    <location>
        <position position="393"/>
    </location>
    <ligand>
        <name>UDP-alpha-D-glucuronate</name>
        <dbReference type="ChEBI" id="CHEBI:58052"/>
    </ligand>
</feature>
<feature type="binding site">
    <location>
        <position position="398"/>
    </location>
    <ligand>
        <name>UDP-alpha-D-glucuronate</name>
        <dbReference type="ChEBI" id="CHEBI:58052"/>
    </ligand>
</feature>
<feature type="binding site">
    <location>
        <begin position="432"/>
        <end position="433"/>
    </location>
    <ligand>
        <name>UDP-alpha-D-glucuronate</name>
        <dbReference type="ChEBI" id="CHEBI:58052"/>
    </ligand>
</feature>
<feature type="binding site">
    <location>
        <position position="460"/>
    </location>
    <ligand>
        <name>UDP-alpha-D-glucuronate</name>
        <dbReference type="ChEBI" id="CHEBI:58052"/>
    </ligand>
</feature>
<feature type="binding site">
    <location>
        <position position="492"/>
    </location>
    <ligand>
        <name>UDP-alpha-D-glucuronate</name>
        <dbReference type="ChEBI" id="CHEBI:58052"/>
    </ligand>
</feature>
<feature type="binding site">
    <location>
        <begin position="526"/>
        <end position="535"/>
    </location>
    <ligand>
        <name>UDP-alpha-D-glucuronate</name>
        <dbReference type="ChEBI" id="CHEBI:58052"/>
    </ligand>
</feature>
<feature type="binding site">
    <location>
        <position position="613"/>
    </location>
    <ligand>
        <name>UDP-alpha-D-glucuronate</name>
        <dbReference type="ChEBI" id="CHEBI:58052"/>
    </ligand>
</feature>
<feature type="site" description="Transition state stabilizer">
    <location>
        <position position="102"/>
    </location>
</feature>
<feature type="site" description="Raises pKa of active site His">
    <location>
        <position position="140"/>
    </location>
</feature>
<feature type="mutagenesis site" description="No formyltransferase activity." evidence="5">
    <original>N</original>
    <variation>A</variation>
    <location>
        <position position="102"/>
    </location>
</feature>
<feature type="mutagenesis site" description="25-fold lower formyltransferase activity." evidence="5">
    <original>H</original>
    <variation>A</variation>
    <location>
        <position position="104"/>
    </location>
</feature>
<feature type="mutagenesis site" description="Less than 1% residual formyltransferase activity." evidence="5">
    <original>H</original>
    <variation>K</variation>
    <location>
        <position position="104"/>
    </location>
</feature>
<feature type="mutagenesis site" description="Less than 1% residual formyltransferase activity." evidence="5">
    <original>D</original>
    <variation>A</variation>
    <variation>N</variation>
    <location>
        <position position="140"/>
    </location>
</feature>
<feature type="mutagenesis site" description="40-fold lower specific activity." evidence="6 7">
    <original>S</original>
    <variation>A</variation>
    <location>
        <position position="433"/>
    </location>
</feature>
<feature type="mutagenesis site" description="No activity." evidence="6 7">
    <original>S</original>
    <variation>T</variation>
    <location>
        <position position="433"/>
    </location>
</feature>
<feature type="mutagenesis site" description="100-fold lower specific activity." evidence="6">
    <original>E</original>
    <variation>A</variation>
    <location>
        <position position="434"/>
    </location>
</feature>
<feature type="mutagenesis site" description="No activity." evidence="6">
    <original>E</original>
    <variation>Q</variation>
    <location>
        <position position="434"/>
    </location>
</feature>
<feature type="mutagenesis site" description="No activity." evidence="7">
    <original>R</original>
    <variation>E</variation>
    <variation>Y</variation>
    <location>
        <position position="619"/>
    </location>
</feature>
<feature type="mutagenesis site" description="400-fold lower activity." evidence="7">
    <original>R</original>
    <variation>M</variation>
    <location>
        <position position="619"/>
    </location>
</feature>
<feature type="strand" evidence="14">
    <location>
        <begin position="2"/>
        <end position="7"/>
    </location>
</feature>
<feature type="helix" evidence="14">
    <location>
        <begin position="9"/>
        <end position="21"/>
    </location>
</feature>
<feature type="strand" evidence="14">
    <location>
        <begin position="25"/>
        <end position="30"/>
    </location>
</feature>
<feature type="helix" evidence="14">
    <location>
        <begin position="45"/>
        <end position="52"/>
    </location>
</feature>
<feature type="helix" evidence="14">
    <location>
        <begin position="65"/>
        <end position="73"/>
    </location>
</feature>
<feature type="strand" evidence="14">
    <location>
        <begin position="77"/>
        <end position="83"/>
    </location>
</feature>
<feature type="helix" evidence="14">
    <location>
        <begin position="90"/>
        <end position="93"/>
    </location>
</feature>
<feature type="strand" evidence="14">
    <location>
        <begin position="100"/>
        <end position="106"/>
    </location>
</feature>
<feature type="turn" evidence="14">
    <location>
        <begin position="108"/>
        <end position="111"/>
    </location>
</feature>
<feature type="strand" evidence="14">
    <location>
        <begin position="112"/>
        <end position="114"/>
    </location>
</feature>
<feature type="helix" evidence="14">
    <location>
        <begin position="116"/>
        <end position="122"/>
    </location>
</feature>
<feature type="strand" evidence="14">
    <location>
        <begin position="126"/>
        <end position="134"/>
    </location>
</feature>
<feature type="turn" evidence="12">
    <location>
        <begin position="139"/>
        <end position="141"/>
    </location>
</feature>
<feature type="strand" evidence="14">
    <location>
        <begin position="144"/>
        <end position="151"/>
    </location>
</feature>
<feature type="helix" evidence="14">
    <location>
        <begin position="158"/>
        <end position="181"/>
    </location>
</feature>
<feature type="helix" evidence="14">
    <location>
        <begin position="192"/>
        <end position="194"/>
    </location>
</feature>
<feature type="helix" evidence="14">
    <location>
        <begin position="203"/>
        <end position="206"/>
    </location>
</feature>
<feature type="helix" evidence="14">
    <location>
        <begin position="214"/>
        <end position="223"/>
    </location>
</feature>
<feature type="strand" evidence="14">
    <location>
        <begin position="231"/>
        <end position="235"/>
    </location>
</feature>
<feature type="strand" evidence="14">
    <location>
        <begin position="238"/>
        <end position="248"/>
    </location>
</feature>
<feature type="strand" evidence="14">
    <location>
        <begin position="258"/>
        <end position="261"/>
    </location>
</feature>
<feature type="turn" evidence="14">
    <location>
        <begin position="262"/>
        <end position="264"/>
    </location>
</feature>
<feature type="strand" evidence="14">
    <location>
        <begin position="265"/>
        <end position="268"/>
    </location>
</feature>
<feature type="strand" evidence="14">
    <location>
        <begin position="270"/>
        <end position="281"/>
    </location>
</feature>
<feature type="helix" evidence="14">
    <location>
        <begin position="289"/>
        <end position="296"/>
    </location>
</feature>
<feature type="strand" evidence="12">
    <location>
        <begin position="299"/>
        <end position="301"/>
    </location>
</feature>
<feature type="strand" evidence="13">
    <location>
        <begin position="317"/>
        <end position="322"/>
    </location>
</feature>
<feature type="helix" evidence="13">
    <location>
        <begin position="326"/>
        <end position="337"/>
    </location>
</feature>
<feature type="strand" evidence="13">
    <location>
        <begin position="342"/>
        <end position="348"/>
    </location>
</feature>
<feature type="helix" evidence="13">
    <location>
        <begin position="351"/>
        <end position="356"/>
    </location>
</feature>
<feature type="strand" evidence="13">
    <location>
        <begin position="362"/>
        <end position="366"/>
    </location>
</feature>
<feature type="turn" evidence="13">
    <location>
        <begin position="369"/>
        <end position="371"/>
    </location>
</feature>
<feature type="helix" evidence="13">
    <location>
        <begin position="374"/>
        <end position="382"/>
    </location>
</feature>
<feature type="strand" evidence="13">
    <location>
        <begin position="384"/>
        <end position="388"/>
    </location>
</feature>
<feature type="helix" evidence="13">
    <location>
        <begin position="395"/>
        <end position="400"/>
    </location>
</feature>
<feature type="helix" evidence="13">
    <location>
        <begin position="402"/>
        <end position="409"/>
    </location>
</feature>
<feature type="helix" evidence="13">
    <location>
        <begin position="411"/>
        <end position="422"/>
    </location>
</feature>
<feature type="strand" evidence="13">
    <location>
        <begin position="426"/>
        <end position="430"/>
    </location>
</feature>
<feature type="helix" evidence="13">
    <location>
        <begin position="433"/>
        <end position="436"/>
    </location>
</feature>
<feature type="strand" evidence="13">
    <location>
        <begin position="442"/>
        <end position="444"/>
    </location>
</feature>
<feature type="turn" evidence="13">
    <location>
        <begin position="446"/>
        <end position="448"/>
    </location>
</feature>
<feature type="strand" evidence="15">
    <location>
        <begin position="451"/>
        <end position="453"/>
    </location>
</feature>
<feature type="helix" evidence="13">
    <location>
        <begin position="459"/>
        <end position="461"/>
    </location>
</feature>
<feature type="helix" evidence="13">
    <location>
        <begin position="462"/>
        <end position="481"/>
    </location>
</feature>
<feature type="strand" evidence="13">
    <location>
        <begin position="485"/>
        <end position="490"/>
    </location>
</feature>
<feature type="strand" evidence="13">
    <location>
        <begin position="492"/>
        <end position="494"/>
    </location>
</feature>
<feature type="strand" evidence="13">
    <location>
        <begin position="504"/>
        <end position="506"/>
    </location>
</feature>
<feature type="helix" evidence="13">
    <location>
        <begin position="510"/>
        <end position="521"/>
    </location>
</feature>
<feature type="strand" evidence="13">
    <location>
        <begin position="525"/>
        <end position="527"/>
    </location>
</feature>
<feature type="helix" evidence="13">
    <location>
        <begin position="528"/>
        <end position="530"/>
    </location>
</feature>
<feature type="strand" evidence="13">
    <location>
        <begin position="534"/>
        <end position="536"/>
    </location>
</feature>
<feature type="helix" evidence="13">
    <location>
        <begin position="540"/>
        <end position="552"/>
    </location>
</feature>
<feature type="helix" evidence="13">
    <location>
        <begin position="554"/>
        <end position="556"/>
    </location>
</feature>
<feature type="turn" evidence="13">
    <location>
        <begin position="557"/>
        <end position="560"/>
    </location>
</feature>
<feature type="strand" evidence="13">
    <location>
        <begin position="561"/>
        <end position="565"/>
    </location>
</feature>
<feature type="strand" evidence="13">
    <location>
        <begin position="570"/>
        <end position="573"/>
    </location>
</feature>
<feature type="helix" evidence="13">
    <location>
        <begin position="574"/>
        <end position="586"/>
    </location>
</feature>
<feature type="helix" evidence="13">
    <location>
        <begin position="591"/>
        <end position="593"/>
    </location>
</feature>
<feature type="strand" evidence="13">
    <location>
        <begin position="600"/>
        <end position="602"/>
    </location>
</feature>
<feature type="helix" evidence="12">
    <location>
        <begin position="606"/>
        <end position="609"/>
    </location>
</feature>
<feature type="helix" evidence="13">
    <location>
        <begin position="624"/>
        <end position="630"/>
    </location>
</feature>
<feature type="helix" evidence="13">
    <location>
        <begin position="638"/>
        <end position="652"/>
    </location>
</feature>
<sequence>MKTVVFAYHDMGCLGIEALLAAGYEISAIFTHTDNPGEKAFYGSVARLAAERGIPVYAPDNVNHPLWVERIAQLSPDVIFSFYYRHLIYDEILQLAPAGAFNLHGSLLPKYRGRAPLNWVLVNGETETGVTLHRMVKRADAGAIVAQLRIAIAPDDIAITLHHKLCHAARQLLEQTLPAIKHGNILEIAQRENEATCFGRRTPDDSFLEWHKPASVLHNMVRAVADPWPGAFSYVGNQKFTVWSSRVHPHASKAQPGSVISVAPLLIACGDGALEIVTGQAGDGITMQGSQLAQTLGLVQGSRLNSQPACTARRRTRVLILGVNGFIGNHLTERLLREDHYEVYGLDIGSDAISRFLNHPHFHFVEGDISIHSEWIEYHVKKCDVVLPLVAIATPIEYTRNPLRVFELDFEENLRIIRYCVKYRKRIIFPSTSEVYGMCSDKYFDEDHSNLIVGPVNKPRWIYSVSKQLLDRVIWAYGEKEGLQFTLFRPFNWMGPRLDNLNAARIGSSRAITQLILNLVEGSPIKLIDGGKQKRCFTDIRDGIEALYRIIENAGNRCDGEIINIGNPENEASIEELGEMLLASFEKHPLRHHFPPFAGFRVVESSSYYGKGYQDVEHRKPSIRNAHRCLDWEPKIDMQETIDETLDFFLRTVDLTDKPS</sequence>
<keyword id="KW-0002">3D-structure</keyword>
<keyword id="KW-0046">Antibiotic resistance</keyword>
<keyword id="KW-0441">Lipid A biosynthesis</keyword>
<keyword id="KW-0444">Lipid biosynthesis</keyword>
<keyword id="KW-0443">Lipid metabolism</keyword>
<keyword id="KW-0448">Lipopolysaccharide biosynthesis</keyword>
<keyword id="KW-0511">Multifunctional enzyme</keyword>
<keyword id="KW-0520">NAD</keyword>
<keyword id="KW-0560">Oxidoreductase</keyword>
<keyword id="KW-1185">Reference proteome</keyword>
<keyword id="KW-0808">Transferase</keyword>
<organism>
    <name type="scientific">Escherichia coli (strain K12)</name>
    <dbReference type="NCBI Taxonomy" id="83333"/>
    <lineage>
        <taxon>Bacteria</taxon>
        <taxon>Pseudomonadati</taxon>
        <taxon>Pseudomonadota</taxon>
        <taxon>Gammaproteobacteria</taxon>
        <taxon>Enterobacterales</taxon>
        <taxon>Enterobacteriaceae</taxon>
        <taxon>Escherichia</taxon>
    </lineage>
</organism>